<gene>
    <name type="ORF">DDB_G0281745</name>
</gene>
<dbReference type="EC" id="2.7.11.1"/>
<dbReference type="EMBL" id="AAFI02000042">
    <property type="protein sequence ID" value="EAL66634.1"/>
    <property type="molecule type" value="Genomic_DNA"/>
</dbReference>
<dbReference type="RefSeq" id="XP_640615.1">
    <property type="nucleotide sequence ID" value="XM_635523.1"/>
</dbReference>
<dbReference type="SMR" id="Q54TH6"/>
<dbReference type="STRING" id="44689.Q54TH6"/>
<dbReference type="GlyGen" id="Q54TH6">
    <property type="glycosylation" value="1 site"/>
</dbReference>
<dbReference type="PaxDb" id="44689-DDB0229863"/>
<dbReference type="EnsemblProtists" id="EAL66634">
    <property type="protein sequence ID" value="EAL66634"/>
    <property type="gene ID" value="DDB_G0281745"/>
</dbReference>
<dbReference type="GeneID" id="8623225"/>
<dbReference type="KEGG" id="ddi:DDB_G0281745"/>
<dbReference type="dictyBase" id="DDB_G0281745"/>
<dbReference type="VEuPathDB" id="AmoebaDB:DDB_G0281745"/>
<dbReference type="eggNOG" id="KOG0192">
    <property type="taxonomic scope" value="Eukaryota"/>
</dbReference>
<dbReference type="HOGENOM" id="CLU_457460_0_0_1"/>
<dbReference type="InParanoid" id="Q54TH6"/>
<dbReference type="OMA" id="WPANGAP"/>
<dbReference type="PRO" id="PR:Q54TH6"/>
<dbReference type="Proteomes" id="UP000002195">
    <property type="component" value="Chromosome 3"/>
</dbReference>
<dbReference type="GO" id="GO:0005737">
    <property type="term" value="C:cytoplasm"/>
    <property type="evidence" value="ECO:0000318"/>
    <property type="project" value="GO_Central"/>
</dbReference>
<dbReference type="GO" id="GO:0005524">
    <property type="term" value="F:ATP binding"/>
    <property type="evidence" value="ECO:0007669"/>
    <property type="project" value="UniProtKB-KW"/>
</dbReference>
<dbReference type="GO" id="GO:0004672">
    <property type="term" value="F:protein kinase activity"/>
    <property type="evidence" value="ECO:0000318"/>
    <property type="project" value="GO_Central"/>
</dbReference>
<dbReference type="GO" id="GO:0106310">
    <property type="term" value="F:protein serine kinase activity"/>
    <property type="evidence" value="ECO:0007669"/>
    <property type="project" value="RHEA"/>
</dbReference>
<dbReference type="GO" id="GO:0004674">
    <property type="term" value="F:protein serine/threonine kinase activity"/>
    <property type="evidence" value="ECO:0007669"/>
    <property type="project" value="UniProtKB-KW"/>
</dbReference>
<dbReference type="GO" id="GO:0007165">
    <property type="term" value="P:signal transduction"/>
    <property type="evidence" value="ECO:0000318"/>
    <property type="project" value="GO_Central"/>
</dbReference>
<dbReference type="CDD" id="cd13999">
    <property type="entry name" value="STKc_MAP3K-like"/>
    <property type="match status" value="1"/>
</dbReference>
<dbReference type="Gene3D" id="3.30.200.20">
    <property type="entry name" value="Phosphorylase Kinase, domain 1"/>
    <property type="match status" value="1"/>
</dbReference>
<dbReference type="Gene3D" id="1.10.510.10">
    <property type="entry name" value="Transferase(Phosphotransferase) domain 1"/>
    <property type="match status" value="1"/>
</dbReference>
<dbReference type="InterPro" id="IPR050940">
    <property type="entry name" value="Actin_reg-Ser/Thr_kinase"/>
</dbReference>
<dbReference type="InterPro" id="IPR011009">
    <property type="entry name" value="Kinase-like_dom_sf"/>
</dbReference>
<dbReference type="InterPro" id="IPR000719">
    <property type="entry name" value="Prot_kinase_dom"/>
</dbReference>
<dbReference type="InterPro" id="IPR017441">
    <property type="entry name" value="Protein_kinase_ATP_BS"/>
</dbReference>
<dbReference type="InterPro" id="IPR001245">
    <property type="entry name" value="Ser-Thr/Tyr_kinase_cat_dom"/>
</dbReference>
<dbReference type="InterPro" id="IPR008271">
    <property type="entry name" value="Ser/Thr_kinase_AS"/>
</dbReference>
<dbReference type="PANTHER" id="PTHR46485:SF5">
    <property type="entry name" value="CENTER DIVIDER, ISOFORM A"/>
    <property type="match status" value="1"/>
</dbReference>
<dbReference type="PANTHER" id="PTHR46485">
    <property type="entry name" value="LIM DOMAIN KINASE 1"/>
    <property type="match status" value="1"/>
</dbReference>
<dbReference type="Pfam" id="PF07714">
    <property type="entry name" value="PK_Tyr_Ser-Thr"/>
    <property type="match status" value="1"/>
</dbReference>
<dbReference type="PRINTS" id="PR00109">
    <property type="entry name" value="TYRKINASE"/>
</dbReference>
<dbReference type="SMART" id="SM00220">
    <property type="entry name" value="S_TKc"/>
    <property type="match status" value="1"/>
</dbReference>
<dbReference type="SUPFAM" id="SSF56112">
    <property type="entry name" value="Protein kinase-like (PK-like)"/>
    <property type="match status" value="1"/>
</dbReference>
<dbReference type="PROSITE" id="PS00107">
    <property type="entry name" value="PROTEIN_KINASE_ATP"/>
    <property type="match status" value="1"/>
</dbReference>
<dbReference type="PROSITE" id="PS50011">
    <property type="entry name" value="PROTEIN_KINASE_DOM"/>
    <property type="match status" value="1"/>
</dbReference>
<dbReference type="PROSITE" id="PS00108">
    <property type="entry name" value="PROTEIN_KINASE_ST"/>
    <property type="match status" value="1"/>
</dbReference>
<organism>
    <name type="scientific">Dictyostelium discoideum</name>
    <name type="common">Social amoeba</name>
    <dbReference type="NCBI Taxonomy" id="44689"/>
    <lineage>
        <taxon>Eukaryota</taxon>
        <taxon>Amoebozoa</taxon>
        <taxon>Evosea</taxon>
        <taxon>Eumycetozoa</taxon>
        <taxon>Dictyostelia</taxon>
        <taxon>Dictyosteliales</taxon>
        <taxon>Dictyosteliaceae</taxon>
        <taxon>Dictyostelium</taxon>
    </lineage>
</organism>
<sequence length="597" mass="67402">MNVGVKVREISTGSIGVIEKGNNQNGFFVNFGSRKNWKRNNEVEVIQNTIDNSNGKQSTTPKPIAQQQQQQQPPPQQSQQQPPQPLKPIPATRPVPTIPKVQSEDPGPRFGNFTLPTTNSSTKYSTLPSRQFFEVSSSPGDENGTFKRSAAPPPPSSLSSNQNGSNLNKVQSPSRPSIPSFEPPTQQPTQPLQKSPRNVPIVPKRTNPSPPSPPLQSPQPTPQQQPPPLKPIPQPQQQQQQQQQQQQQQQQQQQQQQQQQQQQQQPPPLKPIPQPQQSQPTQPIKSQIQIPITNTNGNTNGHSSLVEKSPRNNESTATTATTKDMWNIDYKELKFVGNEIGSGKYGSVSLGYWLGTPVAIKKLHENNEETEILVQRELQILKEIRHPQIVQFLGVSRNEKDEIHIITEFMDGGDLFDALIFGDIPLTWKEKLRISLDIAQSCRFLHARGILHRDLKSQNILLSTNRRAKLCDLGLARMFEERINKRYTCVGTEIWMAPEVCLDQSYSTAVDVFSFGIVLVEIITEKIPDERFPQHRFQFDAPAFLKKVPKECPPDFSKLCVDCTKYNPKERPSFIKVLDTIQNIYDSLPDDDEENYD</sequence>
<proteinExistence type="inferred from homology"/>
<name>Y9863_DICDI</name>
<feature type="chain" id="PRO_0000355163" description="Probable serine/threonine-protein kinase DDB_G0281745">
    <location>
        <begin position="1"/>
        <end position="597"/>
    </location>
</feature>
<feature type="domain" description="Protein kinase" evidence="1">
    <location>
        <begin position="334"/>
        <end position="585"/>
    </location>
</feature>
<feature type="region of interest" description="Disordered" evidence="3">
    <location>
        <begin position="49"/>
        <end position="320"/>
    </location>
</feature>
<feature type="compositionally biased region" description="Polar residues" evidence="3">
    <location>
        <begin position="49"/>
        <end position="61"/>
    </location>
</feature>
<feature type="compositionally biased region" description="Pro residues" evidence="3">
    <location>
        <begin position="72"/>
        <end position="97"/>
    </location>
</feature>
<feature type="compositionally biased region" description="Polar residues" evidence="3">
    <location>
        <begin position="114"/>
        <end position="140"/>
    </location>
</feature>
<feature type="compositionally biased region" description="Low complexity" evidence="3">
    <location>
        <begin position="157"/>
        <end position="168"/>
    </location>
</feature>
<feature type="compositionally biased region" description="Pro residues" evidence="3">
    <location>
        <begin position="208"/>
        <end position="234"/>
    </location>
</feature>
<feature type="compositionally biased region" description="Low complexity" evidence="3">
    <location>
        <begin position="235"/>
        <end position="264"/>
    </location>
</feature>
<feature type="compositionally biased region" description="Pro residues" evidence="3">
    <location>
        <begin position="265"/>
        <end position="274"/>
    </location>
</feature>
<feature type="compositionally biased region" description="Low complexity" evidence="3">
    <location>
        <begin position="275"/>
        <end position="301"/>
    </location>
</feature>
<feature type="active site" description="Proton acceptor" evidence="1 2">
    <location>
        <position position="454"/>
    </location>
</feature>
<feature type="binding site" evidence="1">
    <location>
        <begin position="340"/>
        <end position="348"/>
    </location>
    <ligand>
        <name>ATP</name>
        <dbReference type="ChEBI" id="CHEBI:30616"/>
    </ligand>
</feature>
<feature type="binding site" evidence="1">
    <location>
        <position position="361"/>
    </location>
    <ligand>
        <name>ATP</name>
        <dbReference type="ChEBI" id="CHEBI:30616"/>
    </ligand>
</feature>
<protein>
    <recommendedName>
        <fullName>Probable serine/threonine-protein kinase DDB_G0281745</fullName>
        <ecNumber>2.7.11.1</ecNumber>
    </recommendedName>
</protein>
<evidence type="ECO:0000255" key="1">
    <source>
        <dbReference type="PROSITE-ProRule" id="PRU00159"/>
    </source>
</evidence>
<evidence type="ECO:0000255" key="2">
    <source>
        <dbReference type="PROSITE-ProRule" id="PRU10027"/>
    </source>
</evidence>
<evidence type="ECO:0000256" key="3">
    <source>
        <dbReference type="SAM" id="MobiDB-lite"/>
    </source>
</evidence>
<evidence type="ECO:0000305" key="4"/>
<keyword id="KW-0067">ATP-binding</keyword>
<keyword id="KW-0418">Kinase</keyword>
<keyword id="KW-0547">Nucleotide-binding</keyword>
<keyword id="KW-1185">Reference proteome</keyword>
<keyword id="KW-0723">Serine/threonine-protein kinase</keyword>
<keyword id="KW-0808">Transferase</keyword>
<accession>Q54TH6</accession>
<comment type="catalytic activity">
    <reaction>
        <text>L-seryl-[protein] + ATP = O-phospho-L-seryl-[protein] + ADP + H(+)</text>
        <dbReference type="Rhea" id="RHEA:17989"/>
        <dbReference type="Rhea" id="RHEA-COMP:9863"/>
        <dbReference type="Rhea" id="RHEA-COMP:11604"/>
        <dbReference type="ChEBI" id="CHEBI:15378"/>
        <dbReference type="ChEBI" id="CHEBI:29999"/>
        <dbReference type="ChEBI" id="CHEBI:30616"/>
        <dbReference type="ChEBI" id="CHEBI:83421"/>
        <dbReference type="ChEBI" id="CHEBI:456216"/>
        <dbReference type="EC" id="2.7.11.1"/>
    </reaction>
</comment>
<comment type="catalytic activity">
    <reaction>
        <text>L-threonyl-[protein] + ATP = O-phospho-L-threonyl-[protein] + ADP + H(+)</text>
        <dbReference type="Rhea" id="RHEA:46608"/>
        <dbReference type="Rhea" id="RHEA-COMP:11060"/>
        <dbReference type="Rhea" id="RHEA-COMP:11605"/>
        <dbReference type="ChEBI" id="CHEBI:15378"/>
        <dbReference type="ChEBI" id="CHEBI:30013"/>
        <dbReference type="ChEBI" id="CHEBI:30616"/>
        <dbReference type="ChEBI" id="CHEBI:61977"/>
        <dbReference type="ChEBI" id="CHEBI:456216"/>
        <dbReference type="EC" id="2.7.11.1"/>
    </reaction>
</comment>
<comment type="similarity">
    <text evidence="4">Belongs to the protein kinase superfamily. TKL Ser/Thr protein kinase family.</text>
</comment>
<reference key="1">
    <citation type="journal article" date="2005" name="Nature">
        <title>The genome of the social amoeba Dictyostelium discoideum.</title>
        <authorList>
            <person name="Eichinger L."/>
            <person name="Pachebat J.A."/>
            <person name="Gloeckner G."/>
            <person name="Rajandream M.A."/>
            <person name="Sucgang R."/>
            <person name="Berriman M."/>
            <person name="Song J."/>
            <person name="Olsen R."/>
            <person name="Szafranski K."/>
            <person name="Xu Q."/>
            <person name="Tunggal B."/>
            <person name="Kummerfeld S."/>
            <person name="Madera M."/>
            <person name="Konfortov B.A."/>
            <person name="Rivero F."/>
            <person name="Bankier A.T."/>
            <person name="Lehmann R."/>
            <person name="Hamlin N."/>
            <person name="Davies R."/>
            <person name="Gaudet P."/>
            <person name="Fey P."/>
            <person name="Pilcher K."/>
            <person name="Chen G."/>
            <person name="Saunders D."/>
            <person name="Sodergren E.J."/>
            <person name="Davis P."/>
            <person name="Kerhornou A."/>
            <person name="Nie X."/>
            <person name="Hall N."/>
            <person name="Anjard C."/>
            <person name="Hemphill L."/>
            <person name="Bason N."/>
            <person name="Farbrother P."/>
            <person name="Desany B."/>
            <person name="Just E."/>
            <person name="Morio T."/>
            <person name="Rost R."/>
            <person name="Churcher C.M."/>
            <person name="Cooper J."/>
            <person name="Haydock S."/>
            <person name="van Driessche N."/>
            <person name="Cronin A."/>
            <person name="Goodhead I."/>
            <person name="Muzny D.M."/>
            <person name="Mourier T."/>
            <person name="Pain A."/>
            <person name="Lu M."/>
            <person name="Harper D."/>
            <person name="Lindsay R."/>
            <person name="Hauser H."/>
            <person name="James K.D."/>
            <person name="Quiles M."/>
            <person name="Madan Babu M."/>
            <person name="Saito T."/>
            <person name="Buchrieser C."/>
            <person name="Wardroper A."/>
            <person name="Felder M."/>
            <person name="Thangavelu M."/>
            <person name="Johnson D."/>
            <person name="Knights A."/>
            <person name="Loulseged H."/>
            <person name="Mungall K.L."/>
            <person name="Oliver K."/>
            <person name="Price C."/>
            <person name="Quail M.A."/>
            <person name="Urushihara H."/>
            <person name="Hernandez J."/>
            <person name="Rabbinowitsch E."/>
            <person name="Steffen D."/>
            <person name="Sanders M."/>
            <person name="Ma J."/>
            <person name="Kohara Y."/>
            <person name="Sharp S."/>
            <person name="Simmonds M.N."/>
            <person name="Spiegler S."/>
            <person name="Tivey A."/>
            <person name="Sugano S."/>
            <person name="White B."/>
            <person name="Walker D."/>
            <person name="Woodward J.R."/>
            <person name="Winckler T."/>
            <person name="Tanaka Y."/>
            <person name="Shaulsky G."/>
            <person name="Schleicher M."/>
            <person name="Weinstock G.M."/>
            <person name="Rosenthal A."/>
            <person name="Cox E.C."/>
            <person name="Chisholm R.L."/>
            <person name="Gibbs R.A."/>
            <person name="Loomis W.F."/>
            <person name="Platzer M."/>
            <person name="Kay R.R."/>
            <person name="Williams J.G."/>
            <person name="Dear P.H."/>
            <person name="Noegel A.A."/>
            <person name="Barrell B.G."/>
            <person name="Kuspa A."/>
        </authorList>
    </citation>
    <scope>NUCLEOTIDE SEQUENCE [LARGE SCALE GENOMIC DNA]</scope>
    <source>
        <strain>AX4</strain>
    </source>
</reference>